<evidence type="ECO:0000250" key="1"/>
<evidence type="ECO:0000305" key="2"/>
<dbReference type="EMBL" id="X62157">
    <property type="protein sequence ID" value="CAA44082.1"/>
    <property type="molecule type" value="Genomic_DNA"/>
</dbReference>
<dbReference type="PIR" id="S25205">
    <property type="entry name" value="S25205"/>
</dbReference>
<dbReference type="SMR" id="P42185"/>
<dbReference type="GO" id="GO:0005576">
    <property type="term" value="C:extracellular region"/>
    <property type="evidence" value="ECO:0007669"/>
    <property type="project" value="UniProtKB-SubCell"/>
</dbReference>
<dbReference type="GO" id="GO:0009289">
    <property type="term" value="C:pilus"/>
    <property type="evidence" value="ECO:0007669"/>
    <property type="project" value="UniProtKB-SubCell"/>
</dbReference>
<dbReference type="GO" id="GO:0043709">
    <property type="term" value="P:cell adhesion involved in single-species biofilm formation"/>
    <property type="evidence" value="ECO:0007669"/>
    <property type="project" value="TreeGrafter"/>
</dbReference>
<dbReference type="Gene3D" id="2.60.40.1090">
    <property type="entry name" value="Fimbrial-type adhesion domain"/>
    <property type="match status" value="1"/>
</dbReference>
<dbReference type="InterPro" id="IPR036937">
    <property type="entry name" value="Adhesion_dom_fimbrial_sf"/>
</dbReference>
<dbReference type="InterPro" id="IPR008966">
    <property type="entry name" value="Adhesion_dom_sf"/>
</dbReference>
<dbReference type="InterPro" id="IPR050263">
    <property type="entry name" value="Bact_Fimbrial_Adh_Pro"/>
</dbReference>
<dbReference type="PANTHER" id="PTHR33420:SF26">
    <property type="entry name" value="FIMBRIAL SUBUNIT"/>
    <property type="match status" value="1"/>
</dbReference>
<dbReference type="PANTHER" id="PTHR33420">
    <property type="entry name" value="FIMBRIAL SUBUNIT ELFA-RELATED"/>
    <property type="match status" value="1"/>
</dbReference>
<dbReference type="SUPFAM" id="SSF49401">
    <property type="entry name" value="Bacterial adhesins"/>
    <property type="match status" value="1"/>
</dbReference>
<keyword id="KW-1015">Disulfide bond</keyword>
<keyword id="KW-0281">Fimbrium</keyword>
<keyword id="KW-0964">Secreted</keyword>
<keyword id="KW-0732">Signal</keyword>
<name>PRSH_ECOLX</name>
<accession>P42185</accession>
<gene>
    <name type="primary">prsH</name>
</gene>
<sequence length="195" mass="21837">MRLRFSVPLFFFGCVFVHGVFAGPFPPPGMSLPEYWGEEHVWWDGRATFHGEVVRPACTLAMEDAWQIIDMGETPVRDLQNGFSGPERKFSLRLRNCEFNSQGGNLFSDSRIRVTFDGVRGETPDKFNLSGQAKGINLQIADARGNIARAGKVMPAIPLTGNEEALDYTLRIVRNGKKLEAGNYFAVLGFRVDYE</sequence>
<comment type="function">
    <text>Fimbriae (also called pili), polar filaments radiating from the surface of the bacterium to a length of 0.5-1.5 micrometers and numbering 100-300 per cell, enable bacteria to colonize the epithelium of specific host organs.</text>
</comment>
<comment type="function">
    <text>Seems to anchor the pilus to the bacterial cell. In addition the stoichiometric relationship between PrsH and PrsA determines the pilus length.</text>
</comment>
<comment type="subcellular location">
    <subcellularLocation>
        <location>Secreted</location>
    </subcellularLocation>
    <subcellularLocation>
        <location>Fimbrium</location>
    </subcellularLocation>
</comment>
<comment type="similarity">
    <text evidence="2">Belongs to the fimbrial protein family.</text>
</comment>
<reference key="1">
    <citation type="journal article" date="1992" name="Mol. Microbiol.">
        <title>Horizontal gene transfer of the Escherichia coli pap and prs pili operons as a mechanism for the development of tissue-specific adhesive properties.</title>
        <authorList>
            <person name="Marklund B.-I."/>
            <person name="Tennent J.M."/>
            <person name="Garcia E."/>
            <person name="Hamers A."/>
            <person name="Baga M."/>
            <person name="Lindberg F."/>
            <person name="Gaastra W."/>
            <person name="Normark S."/>
        </authorList>
    </citation>
    <scope>NUCLEOTIDE SEQUENCE [GENOMIC DNA]</scope>
    <source>
        <strain>1442</strain>
    </source>
</reference>
<proteinExistence type="inferred from homology"/>
<protein>
    <recommendedName>
        <fullName>PRS fimbrial minor pilin protein</fullName>
    </recommendedName>
</protein>
<organism>
    <name type="scientific">Escherichia coli</name>
    <dbReference type="NCBI Taxonomy" id="562"/>
    <lineage>
        <taxon>Bacteria</taxon>
        <taxon>Pseudomonadati</taxon>
        <taxon>Pseudomonadota</taxon>
        <taxon>Gammaproteobacteria</taxon>
        <taxon>Enterobacterales</taxon>
        <taxon>Enterobacteriaceae</taxon>
        <taxon>Escherichia</taxon>
    </lineage>
</organism>
<feature type="signal peptide" evidence="1">
    <location>
        <begin position="1"/>
        <end position="22"/>
    </location>
</feature>
<feature type="chain" id="PRO_0000009199" description="PRS fimbrial minor pilin protein">
    <location>
        <begin position="23"/>
        <end position="195"/>
    </location>
</feature>
<feature type="disulfide bond" evidence="2">
    <location>
        <begin position="58"/>
        <end position="97"/>
    </location>
</feature>